<name>RS2_CALBD</name>
<keyword id="KW-0687">Ribonucleoprotein</keyword>
<keyword id="KW-0689">Ribosomal protein</keyword>
<feature type="chain" id="PRO_1000194313" description="Small ribosomal subunit protein uS2">
    <location>
        <begin position="1"/>
        <end position="257"/>
    </location>
</feature>
<feature type="region of interest" description="Disordered" evidence="2">
    <location>
        <begin position="229"/>
        <end position="257"/>
    </location>
</feature>
<evidence type="ECO:0000255" key="1">
    <source>
        <dbReference type="HAMAP-Rule" id="MF_00291"/>
    </source>
</evidence>
<evidence type="ECO:0000256" key="2">
    <source>
        <dbReference type="SAM" id="MobiDB-lite"/>
    </source>
</evidence>
<evidence type="ECO:0000305" key="3"/>
<comment type="similarity">
    <text evidence="1">Belongs to the universal ribosomal protein uS2 family.</text>
</comment>
<sequence>MPVLTMKQLLEAGVHFGHQTRRWNPKMAEYIFTERNGIYIIDLQKTVKKMDEAYEFVKSQVAEGKIVLFVGTKKQAQETIKEEAERCGMFYINQRWLGGLLTNFRTIKTRIERLKELQRMEEDGTFEVLPKKEVNLLRKEKERLLKYLGGIQNMPRIPDILYIVDPRKERNAVLEARKLGIPIVAIVDTNCDPDEIDYVIPGNDDAIRAVKLITSKIADAVIEGREGEQFTPATTSSQEVDKASEQVEIAADDIDEE</sequence>
<accession>B9MKQ1</accession>
<dbReference type="EMBL" id="CP001393">
    <property type="protein sequence ID" value="ACM60909.1"/>
    <property type="molecule type" value="Genomic_DNA"/>
</dbReference>
<dbReference type="RefSeq" id="WP_015908206.1">
    <property type="nucleotide sequence ID" value="NC_012034.1"/>
</dbReference>
<dbReference type="SMR" id="B9MKQ1"/>
<dbReference type="STRING" id="521460.Athe_1816"/>
<dbReference type="GeneID" id="31773173"/>
<dbReference type="KEGG" id="ate:Athe_1816"/>
<dbReference type="eggNOG" id="COG0052">
    <property type="taxonomic scope" value="Bacteria"/>
</dbReference>
<dbReference type="HOGENOM" id="CLU_040318_1_2_9"/>
<dbReference type="Proteomes" id="UP000007723">
    <property type="component" value="Chromosome"/>
</dbReference>
<dbReference type="GO" id="GO:0022627">
    <property type="term" value="C:cytosolic small ribosomal subunit"/>
    <property type="evidence" value="ECO:0007669"/>
    <property type="project" value="TreeGrafter"/>
</dbReference>
<dbReference type="GO" id="GO:0003735">
    <property type="term" value="F:structural constituent of ribosome"/>
    <property type="evidence" value="ECO:0007669"/>
    <property type="project" value="InterPro"/>
</dbReference>
<dbReference type="GO" id="GO:0006412">
    <property type="term" value="P:translation"/>
    <property type="evidence" value="ECO:0007669"/>
    <property type="project" value="UniProtKB-UniRule"/>
</dbReference>
<dbReference type="CDD" id="cd01425">
    <property type="entry name" value="RPS2"/>
    <property type="match status" value="1"/>
</dbReference>
<dbReference type="FunFam" id="1.10.287.610:FF:000001">
    <property type="entry name" value="30S ribosomal protein S2"/>
    <property type="match status" value="1"/>
</dbReference>
<dbReference type="Gene3D" id="3.40.50.10490">
    <property type="entry name" value="Glucose-6-phosphate isomerase like protein, domain 1"/>
    <property type="match status" value="1"/>
</dbReference>
<dbReference type="Gene3D" id="1.10.287.610">
    <property type="entry name" value="Helix hairpin bin"/>
    <property type="match status" value="1"/>
</dbReference>
<dbReference type="HAMAP" id="MF_00291_B">
    <property type="entry name" value="Ribosomal_uS2_B"/>
    <property type="match status" value="1"/>
</dbReference>
<dbReference type="InterPro" id="IPR001865">
    <property type="entry name" value="Ribosomal_uS2"/>
</dbReference>
<dbReference type="InterPro" id="IPR005706">
    <property type="entry name" value="Ribosomal_uS2_bac/mit/plastid"/>
</dbReference>
<dbReference type="InterPro" id="IPR018130">
    <property type="entry name" value="Ribosomal_uS2_CS"/>
</dbReference>
<dbReference type="InterPro" id="IPR023591">
    <property type="entry name" value="Ribosomal_uS2_flav_dom_sf"/>
</dbReference>
<dbReference type="NCBIfam" id="TIGR01011">
    <property type="entry name" value="rpsB_bact"/>
    <property type="match status" value="1"/>
</dbReference>
<dbReference type="PANTHER" id="PTHR12534">
    <property type="entry name" value="30S RIBOSOMAL PROTEIN S2 PROKARYOTIC AND ORGANELLAR"/>
    <property type="match status" value="1"/>
</dbReference>
<dbReference type="PANTHER" id="PTHR12534:SF0">
    <property type="entry name" value="SMALL RIBOSOMAL SUBUNIT PROTEIN US2M"/>
    <property type="match status" value="1"/>
</dbReference>
<dbReference type="Pfam" id="PF00318">
    <property type="entry name" value="Ribosomal_S2"/>
    <property type="match status" value="1"/>
</dbReference>
<dbReference type="PRINTS" id="PR00395">
    <property type="entry name" value="RIBOSOMALS2"/>
</dbReference>
<dbReference type="SUPFAM" id="SSF52313">
    <property type="entry name" value="Ribosomal protein S2"/>
    <property type="match status" value="1"/>
</dbReference>
<dbReference type="PROSITE" id="PS00962">
    <property type="entry name" value="RIBOSOMAL_S2_1"/>
    <property type="match status" value="1"/>
</dbReference>
<organism>
    <name type="scientific">Caldicellulosiruptor bescii (strain ATCC BAA-1888 / DSM 6725 / KCTC 15123 / Z-1320)</name>
    <name type="common">Anaerocellum thermophilum</name>
    <dbReference type="NCBI Taxonomy" id="521460"/>
    <lineage>
        <taxon>Bacteria</taxon>
        <taxon>Bacillati</taxon>
        <taxon>Bacillota</taxon>
        <taxon>Bacillota incertae sedis</taxon>
        <taxon>Caldicellulosiruptorales</taxon>
        <taxon>Caldicellulosiruptoraceae</taxon>
        <taxon>Caldicellulosiruptor</taxon>
    </lineage>
</organism>
<proteinExistence type="inferred from homology"/>
<gene>
    <name evidence="1" type="primary">rpsB</name>
    <name type="ordered locus">Athe_1816</name>
</gene>
<protein>
    <recommendedName>
        <fullName evidence="1">Small ribosomal subunit protein uS2</fullName>
    </recommendedName>
    <alternativeName>
        <fullName evidence="3">30S ribosomal protein S2</fullName>
    </alternativeName>
</protein>
<reference key="1">
    <citation type="submission" date="2009-01" db="EMBL/GenBank/DDBJ databases">
        <title>Complete sequence of chromosome of Caldicellulosiruptor becscii DSM 6725.</title>
        <authorList>
            <person name="Lucas S."/>
            <person name="Copeland A."/>
            <person name="Lapidus A."/>
            <person name="Glavina del Rio T."/>
            <person name="Tice H."/>
            <person name="Bruce D."/>
            <person name="Goodwin L."/>
            <person name="Pitluck S."/>
            <person name="Sims D."/>
            <person name="Meincke L."/>
            <person name="Brettin T."/>
            <person name="Detter J.C."/>
            <person name="Han C."/>
            <person name="Larimer F."/>
            <person name="Land M."/>
            <person name="Hauser L."/>
            <person name="Kyrpides N."/>
            <person name="Ovchinnikova G."/>
            <person name="Kataeva I."/>
            <person name="Adams M.W.W."/>
        </authorList>
    </citation>
    <scope>NUCLEOTIDE SEQUENCE [LARGE SCALE GENOMIC DNA]</scope>
    <source>
        <strain>ATCC BAA-1888 / DSM 6725 / KCTC 15123 / Z-1320</strain>
    </source>
</reference>